<protein>
    <recommendedName>
        <fullName evidence="1">ATP synthase subunit alpha</fullName>
        <ecNumber evidence="1">7.1.2.2</ecNumber>
    </recommendedName>
    <alternativeName>
        <fullName evidence="1">ATP synthase F1 sector subunit alpha</fullName>
    </alternativeName>
    <alternativeName>
        <fullName evidence="1">F-ATPase subunit alpha</fullName>
    </alternativeName>
</protein>
<sequence>MGIQAAEISAILKEQIKNFGQDAQVAEVGRVLSVGDGIARVHGLDNVQAGEMVEFPGGIRGMALNLEVDNVGIVIFGSDRDIKEGDTVKRTNAIVDVPAGEGLLGRVVDGLGNPIDGKGPIVAKERRIADVKAPGIIPRKSVHEPMATGLKSVDAMIPIGRGQRELIIGDRQTGKTAIALDTILNQKSYNDANPGNKLHCFYVAIGQKRSTVAQLVKKLEEAGAMEYTTVVAATASDPAPMQFLAPYSATAMAEYFRDNGMHALIIYDDLSKQAVAYRQMSLLLRRPPGREAYPGDVFYLHSRLLERSAKLNEDFGSGSLTALPVIETQGGDVSAFIPTNVISITDGQIFLETELFYQGIRPAVNTGLSVSRVGSSAQTNSMKSVAGPVKLELAQYREMAAFAQFGSDLDAATQKLLNRGARLTELMKQPQYSPLTNAEIVAVIFAGTNGFLDAVPVKEVGRFEKGLLAYLRSTRKDVLEWLTKEDPKIKGDAEKKLKDAIAEFAKTFA</sequence>
<accession>P72245</accession>
<proteinExistence type="evidence at protein level"/>
<comment type="function">
    <text>Produces ATP from ADP in the presence of a proton gradient across the membrane. The alpha chain is a regulatory subunit.</text>
</comment>
<comment type="catalytic activity">
    <reaction evidence="1">
        <text>ATP + H2O + 4 H(+)(in) = ADP + phosphate + 5 H(+)(out)</text>
        <dbReference type="Rhea" id="RHEA:57720"/>
        <dbReference type="ChEBI" id="CHEBI:15377"/>
        <dbReference type="ChEBI" id="CHEBI:15378"/>
        <dbReference type="ChEBI" id="CHEBI:30616"/>
        <dbReference type="ChEBI" id="CHEBI:43474"/>
        <dbReference type="ChEBI" id="CHEBI:456216"/>
        <dbReference type="EC" id="7.1.2.2"/>
    </reaction>
</comment>
<comment type="subunit">
    <text evidence="2">F-type ATPases have 2 components, CF(1) - the catalytic core - and CF(0) - the membrane proton channel. CF(1) has five subunits: alpha(3), beta(3), gamma(1), delta(1), epsilon(1). CF(0) has four main subunits: a(1), b(1), b'(1) and c(9-12).</text>
</comment>
<comment type="subcellular location">
    <subcellularLocation>
        <location evidence="2">Cellular chromatophore membrane</location>
        <topology evidence="1 2">Peripheral membrane protein</topology>
    </subcellularLocation>
</comment>
<comment type="similarity">
    <text evidence="1">Belongs to the ATPase alpha/beta chains family.</text>
</comment>
<organism>
    <name type="scientific">Rhodobacter capsulatus</name>
    <name type="common">Rhodopseudomonas capsulata</name>
    <dbReference type="NCBI Taxonomy" id="1061"/>
    <lineage>
        <taxon>Bacteria</taxon>
        <taxon>Pseudomonadati</taxon>
        <taxon>Pseudomonadota</taxon>
        <taxon>Alphaproteobacteria</taxon>
        <taxon>Rhodobacterales</taxon>
        <taxon>Rhodobacter group</taxon>
        <taxon>Rhodobacter</taxon>
    </lineage>
</organism>
<feature type="initiator methionine" description="Removed" evidence="2">
    <location>
        <position position="1"/>
    </location>
</feature>
<feature type="chain" id="PRO_0000144345" description="ATP synthase subunit alpha">
    <location>
        <begin position="2"/>
        <end position="509"/>
    </location>
</feature>
<feature type="binding site" evidence="1">
    <location>
        <begin position="169"/>
        <end position="176"/>
    </location>
    <ligand>
        <name>ATP</name>
        <dbReference type="ChEBI" id="CHEBI:30616"/>
    </ligand>
</feature>
<feature type="site" description="Required for activity" evidence="1">
    <location>
        <position position="369"/>
    </location>
</feature>
<reference key="1">
    <citation type="journal article" date="1998" name="J. Bacteriol.">
        <title>The ATP synthase atpHAGDC (F1) operon from Rhodobacter capsulatus.</title>
        <authorList>
            <person name="Borghese R."/>
            <person name="Crimi M."/>
            <person name="Fava L."/>
            <person name="Melandri B.A."/>
        </authorList>
    </citation>
    <scope>NUCLEOTIDE SEQUENCE [GENOMIC DNA]</scope>
    <source>
        <strain>ATCC 33303 / B10</strain>
    </source>
</reference>
<reference key="2">
    <citation type="journal article" date="1988" name="Biochim. Biophys. Acta">
        <title>Purification of the H+-ATPase from Rhodobacter capsulatus, identification of the F1F0 components and reconstitution of the active enzyme.</title>
        <authorList>
            <person name="Gabellini N."/>
            <person name="Gao Z."/>
            <person name="Eckerskorn C."/>
            <person name="Lottspeich F."/>
            <person name="Oesterhelt D."/>
        </authorList>
    </citation>
    <scope>PROTEIN SEQUENCE OF 2-20</scope>
    <scope>SUBUNIT</scope>
    <scope>SUBCELLULAR LOCATION</scope>
    <source>
        <strain>GA</strain>
    </source>
</reference>
<dbReference type="EC" id="7.1.2.2" evidence="1"/>
<dbReference type="EMBL" id="X99599">
    <property type="protein sequence ID" value="CAA67908.1"/>
    <property type="molecule type" value="Genomic_DNA"/>
</dbReference>
<dbReference type="RefSeq" id="WP_013068673.1">
    <property type="nucleotide sequence ID" value="NZ_VIBE01000018.1"/>
</dbReference>
<dbReference type="SMR" id="P72245"/>
<dbReference type="GeneID" id="31491768"/>
<dbReference type="OMA" id="INQRDNW"/>
<dbReference type="GO" id="GO:0005886">
    <property type="term" value="C:plasma membrane"/>
    <property type="evidence" value="ECO:0007669"/>
    <property type="project" value="UniProtKB-UniRule"/>
</dbReference>
<dbReference type="GO" id="GO:0042717">
    <property type="term" value="C:plasma membrane-derived chromatophore membrane"/>
    <property type="evidence" value="ECO:0007669"/>
    <property type="project" value="UniProtKB-SubCell"/>
</dbReference>
<dbReference type="GO" id="GO:0045259">
    <property type="term" value="C:proton-transporting ATP synthase complex"/>
    <property type="evidence" value="ECO:0007669"/>
    <property type="project" value="UniProtKB-KW"/>
</dbReference>
<dbReference type="GO" id="GO:0043531">
    <property type="term" value="F:ADP binding"/>
    <property type="evidence" value="ECO:0007669"/>
    <property type="project" value="TreeGrafter"/>
</dbReference>
<dbReference type="GO" id="GO:0005524">
    <property type="term" value="F:ATP binding"/>
    <property type="evidence" value="ECO:0007669"/>
    <property type="project" value="UniProtKB-UniRule"/>
</dbReference>
<dbReference type="GO" id="GO:0046933">
    <property type="term" value="F:proton-transporting ATP synthase activity, rotational mechanism"/>
    <property type="evidence" value="ECO:0007669"/>
    <property type="project" value="UniProtKB-UniRule"/>
</dbReference>
<dbReference type="CDD" id="cd18113">
    <property type="entry name" value="ATP-synt_F1_alpha_C"/>
    <property type="match status" value="1"/>
</dbReference>
<dbReference type="CDD" id="cd18116">
    <property type="entry name" value="ATP-synt_F1_alpha_N"/>
    <property type="match status" value="1"/>
</dbReference>
<dbReference type="CDD" id="cd01132">
    <property type="entry name" value="F1-ATPase_alpha_CD"/>
    <property type="match status" value="1"/>
</dbReference>
<dbReference type="FunFam" id="1.20.150.20:FF:000001">
    <property type="entry name" value="ATP synthase subunit alpha"/>
    <property type="match status" value="1"/>
</dbReference>
<dbReference type="FunFam" id="2.40.30.20:FF:000001">
    <property type="entry name" value="ATP synthase subunit alpha"/>
    <property type="match status" value="1"/>
</dbReference>
<dbReference type="FunFam" id="3.40.50.300:FF:002432">
    <property type="entry name" value="ATP synthase subunit alpha, mitochondrial"/>
    <property type="match status" value="1"/>
</dbReference>
<dbReference type="Gene3D" id="2.40.30.20">
    <property type="match status" value="1"/>
</dbReference>
<dbReference type="Gene3D" id="1.20.150.20">
    <property type="entry name" value="ATP synthase alpha/beta chain, C-terminal domain"/>
    <property type="match status" value="1"/>
</dbReference>
<dbReference type="Gene3D" id="3.40.50.300">
    <property type="entry name" value="P-loop containing nucleotide triphosphate hydrolases"/>
    <property type="match status" value="1"/>
</dbReference>
<dbReference type="HAMAP" id="MF_01346">
    <property type="entry name" value="ATP_synth_alpha_bact"/>
    <property type="match status" value="1"/>
</dbReference>
<dbReference type="InterPro" id="IPR023366">
    <property type="entry name" value="ATP_synth_asu-like_sf"/>
</dbReference>
<dbReference type="InterPro" id="IPR000793">
    <property type="entry name" value="ATP_synth_asu_C"/>
</dbReference>
<dbReference type="InterPro" id="IPR038376">
    <property type="entry name" value="ATP_synth_asu_C_sf"/>
</dbReference>
<dbReference type="InterPro" id="IPR033732">
    <property type="entry name" value="ATP_synth_F1_a_nt-bd_dom"/>
</dbReference>
<dbReference type="InterPro" id="IPR005294">
    <property type="entry name" value="ATP_synth_F1_asu"/>
</dbReference>
<dbReference type="InterPro" id="IPR020003">
    <property type="entry name" value="ATPase_a/bsu_AS"/>
</dbReference>
<dbReference type="InterPro" id="IPR004100">
    <property type="entry name" value="ATPase_F1/V1/A1_a/bsu_N"/>
</dbReference>
<dbReference type="InterPro" id="IPR036121">
    <property type="entry name" value="ATPase_F1/V1/A1_a/bsu_N_sf"/>
</dbReference>
<dbReference type="InterPro" id="IPR000194">
    <property type="entry name" value="ATPase_F1/V1/A1_a/bsu_nucl-bd"/>
</dbReference>
<dbReference type="InterPro" id="IPR027417">
    <property type="entry name" value="P-loop_NTPase"/>
</dbReference>
<dbReference type="NCBIfam" id="TIGR00962">
    <property type="entry name" value="atpA"/>
    <property type="match status" value="1"/>
</dbReference>
<dbReference type="NCBIfam" id="NF009884">
    <property type="entry name" value="PRK13343.1"/>
    <property type="match status" value="1"/>
</dbReference>
<dbReference type="PANTHER" id="PTHR48082">
    <property type="entry name" value="ATP SYNTHASE SUBUNIT ALPHA, MITOCHONDRIAL"/>
    <property type="match status" value="1"/>
</dbReference>
<dbReference type="PANTHER" id="PTHR48082:SF2">
    <property type="entry name" value="ATP SYNTHASE SUBUNIT ALPHA, MITOCHONDRIAL"/>
    <property type="match status" value="1"/>
</dbReference>
<dbReference type="Pfam" id="PF00006">
    <property type="entry name" value="ATP-synt_ab"/>
    <property type="match status" value="1"/>
</dbReference>
<dbReference type="Pfam" id="PF00306">
    <property type="entry name" value="ATP-synt_ab_C"/>
    <property type="match status" value="1"/>
</dbReference>
<dbReference type="Pfam" id="PF02874">
    <property type="entry name" value="ATP-synt_ab_N"/>
    <property type="match status" value="1"/>
</dbReference>
<dbReference type="PIRSF" id="PIRSF039088">
    <property type="entry name" value="F_ATPase_subunit_alpha"/>
    <property type="match status" value="1"/>
</dbReference>
<dbReference type="SUPFAM" id="SSF47917">
    <property type="entry name" value="C-terminal domain of alpha and beta subunits of F1 ATP synthase"/>
    <property type="match status" value="1"/>
</dbReference>
<dbReference type="SUPFAM" id="SSF50615">
    <property type="entry name" value="N-terminal domain of alpha and beta subunits of F1 ATP synthase"/>
    <property type="match status" value="1"/>
</dbReference>
<dbReference type="SUPFAM" id="SSF52540">
    <property type="entry name" value="P-loop containing nucleoside triphosphate hydrolases"/>
    <property type="match status" value="1"/>
</dbReference>
<dbReference type="PROSITE" id="PS00152">
    <property type="entry name" value="ATPASE_ALPHA_BETA"/>
    <property type="match status" value="1"/>
</dbReference>
<name>ATPA_RHOCA</name>
<gene>
    <name evidence="1" type="primary">atpA</name>
</gene>
<keyword id="KW-0066">ATP synthesis</keyword>
<keyword id="KW-0067">ATP-binding</keyword>
<keyword id="KW-0139">CF(1)</keyword>
<keyword id="KW-0903">Direct protein sequencing</keyword>
<keyword id="KW-0375">Hydrogen ion transport</keyword>
<keyword id="KW-0406">Ion transport</keyword>
<keyword id="KW-0472">Membrane</keyword>
<keyword id="KW-0547">Nucleotide-binding</keyword>
<keyword id="KW-1278">Translocase</keyword>
<keyword id="KW-0813">Transport</keyword>
<evidence type="ECO:0000255" key="1">
    <source>
        <dbReference type="HAMAP-Rule" id="MF_01346"/>
    </source>
</evidence>
<evidence type="ECO:0000269" key="2">
    <source ref="2"/>
</evidence>